<gene>
    <name evidence="1" type="primary">rnc</name>
    <name type="ordered locus">SPG_1138</name>
</gene>
<keyword id="KW-0963">Cytoplasm</keyword>
<keyword id="KW-0255">Endonuclease</keyword>
<keyword id="KW-0378">Hydrolase</keyword>
<keyword id="KW-0460">Magnesium</keyword>
<keyword id="KW-0479">Metal-binding</keyword>
<keyword id="KW-0507">mRNA processing</keyword>
<keyword id="KW-0540">Nuclease</keyword>
<keyword id="KW-0694">RNA-binding</keyword>
<keyword id="KW-0698">rRNA processing</keyword>
<keyword id="KW-0699">rRNA-binding</keyword>
<keyword id="KW-0819">tRNA processing</keyword>
<reference key="1">
    <citation type="journal article" date="2001" name="Microb. Drug Resist.">
        <title>Annotated draft genomic sequence from a Streptococcus pneumoniae type 19F clinical isolate.</title>
        <authorList>
            <person name="Dopazo J."/>
            <person name="Mendoza A."/>
            <person name="Herrero J."/>
            <person name="Caldara F."/>
            <person name="Humbert Y."/>
            <person name="Friedli L."/>
            <person name="Guerrier M."/>
            <person name="Grand-Schenk E."/>
            <person name="Gandin C."/>
            <person name="de Francesco M."/>
            <person name="Polissi A."/>
            <person name="Buell G."/>
            <person name="Feger G."/>
            <person name="Garcia E."/>
            <person name="Peitsch M."/>
            <person name="Garcia-Bustos J.F."/>
        </authorList>
    </citation>
    <scope>NUCLEOTIDE SEQUENCE [LARGE SCALE GENOMIC DNA]</scope>
    <source>
        <strain>G54</strain>
    </source>
</reference>
<reference key="2">
    <citation type="submission" date="2008-03" db="EMBL/GenBank/DDBJ databases">
        <title>Pneumococcal beta glucoside metabolism investigated by whole genome comparison.</title>
        <authorList>
            <person name="Mulas L."/>
            <person name="Trappetti C."/>
            <person name="Hakenbeck R."/>
            <person name="Iannelli F."/>
            <person name="Pozzi G."/>
            <person name="Davidsen T.M."/>
            <person name="Tettelin H."/>
            <person name="Oggioni M."/>
        </authorList>
    </citation>
    <scope>NUCLEOTIDE SEQUENCE [LARGE SCALE GENOMIC DNA]</scope>
    <source>
        <strain>G54</strain>
    </source>
</reference>
<accession>B5E4Y2</accession>
<protein>
    <recommendedName>
        <fullName evidence="1">Ribonuclease 3</fullName>
        <ecNumber evidence="1">3.1.26.3</ecNumber>
    </recommendedName>
    <alternativeName>
        <fullName evidence="1">Ribonuclease III</fullName>
        <shortName evidence="1">RNase III</shortName>
    </alternativeName>
</protein>
<proteinExistence type="inferred from homology"/>
<name>RNC_STRP4</name>
<organism>
    <name type="scientific">Streptococcus pneumoniae serotype 19F (strain G54)</name>
    <dbReference type="NCBI Taxonomy" id="512566"/>
    <lineage>
        <taxon>Bacteria</taxon>
        <taxon>Bacillati</taxon>
        <taxon>Bacillota</taxon>
        <taxon>Bacilli</taxon>
        <taxon>Lactobacillales</taxon>
        <taxon>Streptococcaceae</taxon>
        <taxon>Streptococcus</taxon>
    </lineage>
</organism>
<dbReference type="EC" id="3.1.26.3" evidence="1"/>
<dbReference type="EMBL" id="CP001015">
    <property type="protein sequence ID" value="ACF56212.1"/>
    <property type="molecule type" value="Genomic_DNA"/>
</dbReference>
<dbReference type="SMR" id="B5E4Y2"/>
<dbReference type="KEGG" id="spx:SPG_1138"/>
<dbReference type="HOGENOM" id="CLU_000907_1_3_9"/>
<dbReference type="GO" id="GO:0005737">
    <property type="term" value="C:cytoplasm"/>
    <property type="evidence" value="ECO:0007669"/>
    <property type="project" value="UniProtKB-SubCell"/>
</dbReference>
<dbReference type="GO" id="GO:0003725">
    <property type="term" value="F:double-stranded RNA binding"/>
    <property type="evidence" value="ECO:0007669"/>
    <property type="project" value="TreeGrafter"/>
</dbReference>
<dbReference type="GO" id="GO:0046872">
    <property type="term" value="F:metal ion binding"/>
    <property type="evidence" value="ECO:0007669"/>
    <property type="project" value="UniProtKB-KW"/>
</dbReference>
<dbReference type="GO" id="GO:0004525">
    <property type="term" value="F:ribonuclease III activity"/>
    <property type="evidence" value="ECO:0007669"/>
    <property type="project" value="UniProtKB-UniRule"/>
</dbReference>
<dbReference type="GO" id="GO:0019843">
    <property type="term" value="F:rRNA binding"/>
    <property type="evidence" value="ECO:0007669"/>
    <property type="project" value="UniProtKB-KW"/>
</dbReference>
<dbReference type="GO" id="GO:0006397">
    <property type="term" value="P:mRNA processing"/>
    <property type="evidence" value="ECO:0007669"/>
    <property type="project" value="UniProtKB-UniRule"/>
</dbReference>
<dbReference type="GO" id="GO:0010468">
    <property type="term" value="P:regulation of gene expression"/>
    <property type="evidence" value="ECO:0007669"/>
    <property type="project" value="TreeGrafter"/>
</dbReference>
<dbReference type="GO" id="GO:0006364">
    <property type="term" value="P:rRNA processing"/>
    <property type="evidence" value="ECO:0007669"/>
    <property type="project" value="UniProtKB-UniRule"/>
</dbReference>
<dbReference type="GO" id="GO:0008033">
    <property type="term" value="P:tRNA processing"/>
    <property type="evidence" value="ECO:0007669"/>
    <property type="project" value="UniProtKB-KW"/>
</dbReference>
<dbReference type="CDD" id="cd10845">
    <property type="entry name" value="DSRM_RNAse_III_family"/>
    <property type="match status" value="1"/>
</dbReference>
<dbReference type="CDD" id="cd00593">
    <property type="entry name" value="RIBOc"/>
    <property type="match status" value="1"/>
</dbReference>
<dbReference type="FunFam" id="1.10.1520.10:FF:000001">
    <property type="entry name" value="Ribonuclease 3"/>
    <property type="match status" value="1"/>
</dbReference>
<dbReference type="FunFam" id="3.30.160.20:FF:000003">
    <property type="entry name" value="Ribonuclease 3"/>
    <property type="match status" value="1"/>
</dbReference>
<dbReference type="Gene3D" id="3.30.160.20">
    <property type="match status" value="1"/>
</dbReference>
<dbReference type="Gene3D" id="1.10.1520.10">
    <property type="entry name" value="Ribonuclease III domain"/>
    <property type="match status" value="1"/>
</dbReference>
<dbReference type="HAMAP" id="MF_00104">
    <property type="entry name" value="RNase_III"/>
    <property type="match status" value="1"/>
</dbReference>
<dbReference type="InterPro" id="IPR014720">
    <property type="entry name" value="dsRBD_dom"/>
</dbReference>
<dbReference type="InterPro" id="IPR011907">
    <property type="entry name" value="RNase_III"/>
</dbReference>
<dbReference type="InterPro" id="IPR000999">
    <property type="entry name" value="RNase_III_dom"/>
</dbReference>
<dbReference type="InterPro" id="IPR036389">
    <property type="entry name" value="RNase_III_sf"/>
</dbReference>
<dbReference type="NCBIfam" id="TIGR02191">
    <property type="entry name" value="RNaseIII"/>
    <property type="match status" value="1"/>
</dbReference>
<dbReference type="PANTHER" id="PTHR11207:SF0">
    <property type="entry name" value="RIBONUCLEASE 3"/>
    <property type="match status" value="1"/>
</dbReference>
<dbReference type="PANTHER" id="PTHR11207">
    <property type="entry name" value="RIBONUCLEASE III"/>
    <property type="match status" value="1"/>
</dbReference>
<dbReference type="Pfam" id="PF00035">
    <property type="entry name" value="dsrm"/>
    <property type="match status" value="1"/>
</dbReference>
<dbReference type="Pfam" id="PF14622">
    <property type="entry name" value="Ribonucleas_3_3"/>
    <property type="match status" value="1"/>
</dbReference>
<dbReference type="SMART" id="SM00358">
    <property type="entry name" value="DSRM"/>
    <property type="match status" value="1"/>
</dbReference>
<dbReference type="SMART" id="SM00535">
    <property type="entry name" value="RIBOc"/>
    <property type="match status" value="1"/>
</dbReference>
<dbReference type="SUPFAM" id="SSF54768">
    <property type="entry name" value="dsRNA-binding domain-like"/>
    <property type="match status" value="1"/>
</dbReference>
<dbReference type="SUPFAM" id="SSF69065">
    <property type="entry name" value="RNase III domain-like"/>
    <property type="match status" value="1"/>
</dbReference>
<dbReference type="PROSITE" id="PS50137">
    <property type="entry name" value="DS_RBD"/>
    <property type="match status" value="1"/>
</dbReference>
<dbReference type="PROSITE" id="PS00517">
    <property type="entry name" value="RNASE_3_1"/>
    <property type="match status" value="1"/>
</dbReference>
<dbReference type="PROSITE" id="PS50142">
    <property type="entry name" value="RNASE_3_2"/>
    <property type="match status" value="1"/>
</dbReference>
<evidence type="ECO:0000255" key="1">
    <source>
        <dbReference type="HAMAP-Rule" id="MF_00104"/>
    </source>
</evidence>
<comment type="function">
    <text evidence="1">Digests double-stranded RNA. Involved in the processing of primary rRNA transcript to yield the immediate precursors to the large and small rRNAs (23S and 16S). Processes some mRNAs, and tRNAs when they are encoded in the rRNA operon. Processes pre-crRNA and tracrRNA of type II CRISPR loci if present in the organism.</text>
</comment>
<comment type="catalytic activity">
    <reaction evidence="1">
        <text>Endonucleolytic cleavage to 5'-phosphomonoester.</text>
        <dbReference type="EC" id="3.1.26.3"/>
    </reaction>
</comment>
<comment type="cofactor">
    <cofactor evidence="1">
        <name>Mg(2+)</name>
        <dbReference type="ChEBI" id="CHEBI:18420"/>
    </cofactor>
</comment>
<comment type="subunit">
    <text evidence="1">Homodimer.</text>
</comment>
<comment type="subcellular location">
    <subcellularLocation>
        <location evidence="1">Cytoplasm</location>
    </subcellularLocation>
</comment>
<comment type="similarity">
    <text evidence="1">Belongs to the ribonuclease III family.</text>
</comment>
<feature type="chain" id="PRO_1000094135" description="Ribonuclease 3">
    <location>
        <begin position="1"/>
        <end position="232"/>
    </location>
</feature>
<feature type="domain" description="RNase III" evidence="1">
    <location>
        <begin position="5"/>
        <end position="134"/>
    </location>
</feature>
<feature type="domain" description="DRBM" evidence="1">
    <location>
        <begin position="160"/>
        <end position="229"/>
    </location>
</feature>
<feature type="active site" evidence="1">
    <location>
        <position position="51"/>
    </location>
</feature>
<feature type="active site" evidence="1">
    <location>
        <position position="123"/>
    </location>
</feature>
<feature type="binding site" evidence="1">
    <location>
        <position position="47"/>
    </location>
    <ligand>
        <name>Mg(2+)</name>
        <dbReference type="ChEBI" id="CHEBI:18420"/>
    </ligand>
</feature>
<feature type="binding site" evidence="1">
    <location>
        <position position="120"/>
    </location>
    <ligand>
        <name>Mg(2+)</name>
        <dbReference type="ChEBI" id="CHEBI:18420"/>
    </ligand>
</feature>
<feature type="binding site" evidence="1">
    <location>
        <position position="123"/>
    </location>
    <ligand>
        <name>Mg(2+)</name>
        <dbReference type="ChEBI" id="CHEBI:18420"/>
    </ligand>
</feature>
<sequence>MKELQTVLKNHFEIEFADKKLLETAFTHTSYANEHRLLKISHNERLEFLGDAVLQLLISEYLYKKYPKKPEGDLSKLRAMIVREESLAGFARDCQFDQFIKLGKGEEKSGGRNRDTILGDAFEAFLGALLLDKDVAKVKEFIYQVMIPKVEAGEFEMITDYKTHLQELLQVNGDVAIRYQVISETGPAHDKVFDVEVLVEGKSIGQGQGRSKKLAEQEAAKNAVEKGLDSCI</sequence>